<comment type="function">
    <text evidence="2">GTP hydrolase that promotes the GTP-dependent binding of aminoacyl-tRNA to the A-site of ribosomes during protein biosynthesis.</text>
</comment>
<comment type="catalytic activity">
    <reaction evidence="2">
        <text>GTP + H2O = GDP + phosphate + H(+)</text>
        <dbReference type="Rhea" id="RHEA:19669"/>
        <dbReference type="ChEBI" id="CHEBI:15377"/>
        <dbReference type="ChEBI" id="CHEBI:15378"/>
        <dbReference type="ChEBI" id="CHEBI:37565"/>
        <dbReference type="ChEBI" id="CHEBI:43474"/>
        <dbReference type="ChEBI" id="CHEBI:58189"/>
        <dbReference type="EC" id="3.6.5.3"/>
    </reaction>
    <physiologicalReaction direction="left-to-right" evidence="2">
        <dbReference type="Rhea" id="RHEA:19670"/>
    </physiologicalReaction>
</comment>
<comment type="subunit">
    <text evidence="2">Monomer.</text>
</comment>
<comment type="subcellular location">
    <subcellularLocation>
        <location evidence="2">Cytoplasm</location>
    </subcellularLocation>
</comment>
<comment type="similarity">
    <text evidence="2">Belongs to the TRAFAC class translation factor GTPase superfamily. Classic translation factor GTPase family. EF-Tu/EF-1A subfamily.</text>
</comment>
<reference key="1">
    <citation type="journal article" date="2004" name="Nat. Biotechnol.">
        <title>Complete sequence and comparative genome analysis of the dairy bacterium Streptococcus thermophilus.</title>
        <authorList>
            <person name="Bolotin A."/>
            <person name="Quinquis B."/>
            <person name="Renault P."/>
            <person name="Sorokin A."/>
            <person name="Ehrlich S.D."/>
            <person name="Kulakauskas S."/>
            <person name="Lapidus A."/>
            <person name="Goltsman E."/>
            <person name="Mazur M."/>
            <person name="Pusch G.D."/>
            <person name="Fonstein M."/>
            <person name="Overbeek R."/>
            <person name="Kyprides N."/>
            <person name="Purnelle B."/>
            <person name="Prozzi D."/>
            <person name="Ngui K."/>
            <person name="Masuy D."/>
            <person name="Hancy F."/>
            <person name="Burteau S."/>
            <person name="Boutry M."/>
            <person name="Delcour J."/>
            <person name="Goffeau A."/>
            <person name="Hols P."/>
        </authorList>
    </citation>
    <scope>NUCLEOTIDE SEQUENCE [LARGE SCALE GENOMIC DNA]</scope>
    <source>
        <strain>ATCC BAA-250 / LMG 18311</strain>
    </source>
</reference>
<name>EFTU_STRT2</name>
<protein>
    <recommendedName>
        <fullName evidence="2">Elongation factor Tu</fullName>
        <shortName evidence="2">EF-Tu</shortName>
        <ecNumber evidence="2">3.6.5.3</ecNumber>
    </recommendedName>
</protein>
<sequence>MAKEKYDRSKPHVNIGTIGHVDHGKTTLTAAITTVLARRLPSAVNTPKDYASIDAAPEERERGITINTAHVEYETEKRHYAHIDAPGHADYVKNMITGAAQMDGAILVVASTDGPMPQTREHILLSRQVGVKHLIVFMNKVDLVDDEELLELVEMEIRDLLSEYDFPGDDIPVIQGSALKALEGDSKYEDIIMDLMNTVDEYIPEPERDTDKPLLLPVEDVFSITGRGTVASGRIDRGVVRVNDEVEIVGLKEESQKAVVTGVEMFRKQLDEGIAGDNVGVLLRGIQRDEIERGQVLAAPGSIKPHTKFKGEVYILTKEEGGRHTPFFNNYRPQFYFRTTDVTGSIELPAGTEMVMPGDNVTIDVELIHPIAVEKGTTFSIREGGRTVGSGIVTEIEA</sequence>
<gene>
    <name evidence="2" type="primary">tuf</name>
    <name type="ordered locus">stu0487</name>
</gene>
<proteinExistence type="inferred from homology"/>
<evidence type="ECO:0000250" key="1"/>
<evidence type="ECO:0000255" key="2">
    <source>
        <dbReference type="HAMAP-Rule" id="MF_00118"/>
    </source>
</evidence>
<dbReference type="EC" id="3.6.5.3" evidence="2"/>
<dbReference type="EMBL" id="CP000023">
    <property type="protein sequence ID" value="AAV60197.1"/>
    <property type="molecule type" value="Genomic_DNA"/>
</dbReference>
<dbReference type="RefSeq" id="WP_002949971.1">
    <property type="nucleotide sequence ID" value="NC_006448.1"/>
</dbReference>
<dbReference type="SMR" id="Q5M5I8"/>
<dbReference type="STRING" id="264199.stu0487"/>
<dbReference type="GeneID" id="66898397"/>
<dbReference type="KEGG" id="stl:stu0487"/>
<dbReference type="eggNOG" id="COG0050">
    <property type="taxonomic scope" value="Bacteria"/>
</dbReference>
<dbReference type="HOGENOM" id="CLU_007265_0_1_9"/>
<dbReference type="Proteomes" id="UP000001170">
    <property type="component" value="Chromosome"/>
</dbReference>
<dbReference type="GO" id="GO:0005829">
    <property type="term" value="C:cytosol"/>
    <property type="evidence" value="ECO:0007669"/>
    <property type="project" value="TreeGrafter"/>
</dbReference>
<dbReference type="GO" id="GO:0005525">
    <property type="term" value="F:GTP binding"/>
    <property type="evidence" value="ECO:0007669"/>
    <property type="project" value="UniProtKB-UniRule"/>
</dbReference>
<dbReference type="GO" id="GO:0003924">
    <property type="term" value="F:GTPase activity"/>
    <property type="evidence" value="ECO:0007669"/>
    <property type="project" value="InterPro"/>
</dbReference>
<dbReference type="GO" id="GO:0003746">
    <property type="term" value="F:translation elongation factor activity"/>
    <property type="evidence" value="ECO:0007669"/>
    <property type="project" value="UniProtKB-UniRule"/>
</dbReference>
<dbReference type="CDD" id="cd01884">
    <property type="entry name" value="EF_Tu"/>
    <property type="match status" value="1"/>
</dbReference>
<dbReference type="CDD" id="cd03697">
    <property type="entry name" value="EFTU_II"/>
    <property type="match status" value="1"/>
</dbReference>
<dbReference type="CDD" id="cd03707">
    <property type="entry name" value="EFTU_III"/>
    <property type="match status" value="1"/>
</dbReference>
<dbReference type="FunFam" id="2.40.30.10:FF:000001">
    <property type="entry name" value="Elongation factor Tu"/>
    <property type="match status" value="1"/>
</dbReference>
<dbReference type="FunFam" id="3.40.50.300:FF:000003">
    <property type="entry name" value="Elongation factor Tu"/>
    <property type="match status" value="1"/>
</dbReference>
<dbReference type="Gene3D" id="3.40.50.300">
    <property type="entry name" value="P-loop containing nucleotide triphosphate hydrolases"/>
    <property type="match status" value="1"/>
</dbReference>
<dbReference type="Gene3D" id="2.40.30.10">
    <property type="entry name" value="Translation factors"/>
    <property type="match status" value="2"/>
</dbReference>
<dbReference type="HAMAP" id="MF_00118_B">
    <property type="entry name" value="EF_Tu_B"/>
    <property type="match status" value="1"/>
</dbReference>
<dbReference type="InterPro" id="IPR041709">
    <property type="entry name" value="EF-Tu_GTP-bd"/>
</dbReference>
<dbReference type="InterPro" id="IPR050055">
    <property type="entry name" value="EF-Tu_GTPase"/>
</dbReference>
<dbReference type="InterPro" id="IPR004161">
    <property type="entry name" value="EFTu-like_2"/>
</dbReference>
<dbReference type="InterPro" id="IPR033720">
    <property type="entry name" value="EFTU_2"/>
</dbReference>
<dbReference type="InterPro" id="IPR031157">
    <property type="entry name" value="G_TR_CS"/>
</dbReference>
<dbReference type="InterPro" id="IPR027417">
    <property type="entry name" value="P-loop_NTPase"/>
</dbReference>
<dbReference type="InterPro" id="IPR005225">
    <property type="entry name" value="Small_GTP-bd"/>
</dbReference>
<dbReference type="InterPro" id="IPR000795">
    <property type="entry name" value="T_Tr_GTP-bd_dom"/>
</dbReference>
<dbReference type="InterPro" id="IPR009000">
    <property type="entry name" value="Transl_B-barrel_sf"/>
</dbReference>
<dbReference type="InterPro" id="IPR009001">
    <property type="entry name" value="Transl_elong_EF1A/Init_IF2_C"/>
</dbReference>
<dbReference type="InterPro" id="IPR004541">
    <property type="entry name" value="Transl_elong_EFTu/EF1A_bac/org"/>
</dbReference>
<dbReference type="InterPro" id="IPR004160">
    <property type="entry name" value="Transl_elong_EFTu/EF1A_C"/>
</dbReference>
<dbReference type="NCBIfam" id="TIGR00485">
    <property type="entry name" value="EF-Tu"/>
    <property type="match status" value="1"/>
</dbReference>
<dbReference type="NCBIfam" id="NF000766">
    <property type="entry name" value="PRK00049.1"/>
    <property type="match status" value="1"/>
</dbReference>
<dbReference type="NCBIfam" id="NF009372">
    <property type="entry name" value="PRK12735.1"/>
    <property type="match status" value="1"/>
</dbReference>
<dbReference type="NCBIfam" id="NF009373">
    <property type="entry name" value="PRK12736.1"/>
    <property type="match status" value="1"/>
</dbReference>
<dbReference type="NCBIfam" id="TIGR00231">
    <property type="entry name" value="small_GTP"/>
    <property type="match status" value="1"/>
</dbReference>
<dbReference type="PANTHER" id="PTHR43721:SF22">
    <property type="entry name" value="ELONGATION FACTOR TU, MITOCHONDRIAL"/>
    <property type="match status" value="1"/>
</dbReference>
<dbReference type="PANTHER" id="PTHR43721">
    <property type="entry name" value="ELONGATION FACTOR TU-RELATED"/>
    <property type="match status" value="1"/>
</dbReference>
<dbReference type="Pfam" id="PF00009">
    <property type="entry name" value="GTP_EFTU"/>
    <property type="match status" value="1"/>
</dbReference>
<dbReference type="Pfam" id="PF03144">
    <property type="entry name" value="GTP_EFTU_D2"/>
    <property type="match status" value="1"/>
</dbReference>
<dbReference type="Pfam" id="PF03143">
    <property type="entry name" value="GTP_EFTU_D3"/>
    <property type="match status" value="1"/>
</dbReference>
<dbReference type="PRINTS" id="PR00315">
    <property type="entry name" value="ELONGATNFCT"/>
</dbReference>
<dbReference type="SUPFAM" id="SSF50465">
    <property type="entry name" value="EF-Tu/eEF-1alpha/eIF2-gamma C-terminal domain"/>
    <property type="match status" value="1"/>
</dbReference>
<dbReference type="SUPFAM" id="SSF52540">
    <property type="entry name" value="P-loop containing nucleoside triphosphate hydrolases"/>
    <property type="match status" value="1"/>
</dbReference>
<dbReference type="SUPFAM" id="SSF50447">
    <property type="entry name" value="Translation proteins"/>
    <property type="match status" value="1"/>
</dbReference>
<dbReference type="PROSITE" id="PS00301">
    <property type="entry name" value="G_TR_1"/>
    <property type="match status" value="1"/>
</dbReference>
<dbReference type="PROSITE" id="PS51722">
    <property type="entry name" value="G_TR_2"/>
    <property type="match status" value="1"/>
</dbReference>
<feature type="chain" id="PRO_1000015762" description="Elongation factor Tu">
    <location>
        <begin position="1"/>
        <end position="398"/>
    </location>
</feature>
<feature type="domain" description="tr-type G">
    <location>
        <begin position="10"/>
        <end position="207"/>
    </location>
</feature>
<feature type="region of interest" description="G1" evidence="1">
    <location>
        <begin position="19"/>
        <end position="26"/>
    </location>
</feature>
<feature type="region of interest" description="G2" evidence="1">
    <location>
        <begin position="63"/>
        <end position="67"/>
    </location>
</feature>
<feature type="region of interest" description="G3" evidence="1">
    <location>
        <begin position="84"/>
        <end position="87"/>
    </location>
</feature>
<feature type="region of interest" description="G4" evidence="1">
    <location>
        <begin position="139"/>
        <end position="142"/>
    </location>
</feature>
<feature type="region of interest" description="G5" evidence="1">
    <location>
        <begin position="177"/>
        <end position="179"/>
    </location>
</feature>
<feature type="binding site" evidence="2">
    <location>
        <begin position="19"/>
        <end position="26"/>
    </location>
    <ligand>
        <name>GTP</name>
        <dbReference type="ChEBI" id="CHEBI:37565"/>
    </ligand>
</feature>
<feature type="binding site" evidence="2">
    <location>
        <position position="26"/>
    </location>
    <ligand>
        <name>Mg(2+)</name>
        <dbReference type="ChEBI" id="CHEBI:18420"/>
    </ligand>
</feature>
<feature type="binding site" evidence="2">
    <location>
        <begin position="84"/>
        <end position="88"/>
    </location>
    <ligand>
        <name>GTP</name>
        <dbReference type="ChEBI" id="CHEBI:37565"/>
    </ligand>
</feature>
<feature type="binding site" evidence="2">
    <location>
        <begin position="139"/>
        <end position="142"/>
    </location>
    <ligand>
        <name>GTP</name>
        <dbReference type="ChEBI" id="CHEBI:37565"/>
    </ligand>
</feature>
<accession>Q5M5I8</accession>
<keyword id="KW-0963">Cytoplasm</keyword>
<keyword id="KW-0251">Elongation factor</keyword>
<keyword id="KW-0342">GTP-binding</keyword>
<keyword id="KW-0378">Hydrolase</keyword>
<keyword id="KW-0460">Magnesium</keyword>
<keyword id="KW-0479">Metal-binding</keyword>
<keyword id="KW-0547">Nucleotide-binding</keyword>
<keyword id="KW-0648">Protein biosynthesis</keyword>
<keyword id="KW-1185">Reference proteome</keyword>
<organism>
    <name type="scientific">Streptococcus thermophilus (strain ATCC BAA-250 / LMG 18311)</name>
    <dbReference type="NCBI Taxonomy" id="264199"/>
    <lineage>
        <taxon>Bacteria</taxon>
        <taxon>Bacillati</taxon>
        <taxon>Bacillota</taxon>
        <taxon>Bacilli</taxon>
        <taxon>Lactobacillales</taxon>
        <taxon>Streptococcaceae</taxon>
        <taxon>Streptococcus</taxon>
    </lineage>
</organism>